<gene>
    <name evidence="1" type="primary">sucC</name>
    <name type="ordered locus">Arth_0815</name>
</gene>
<reference key="1">
    <citation type="journal article" date="2013" name="Stand. Genomic Sci.">
        <title>Complete genome sequence of Arthrobacter sp. strain FB24.</title>
        <authorList>
            <person name="Nakatsu C.H."/>
            <person name="Barabote R."/>
            <person name="Thompson S."/>
            <person name="Bruce D."/>
            <person name="Detter C."/>
            <person name="Brettin T."/>
            <person name="Han C."/>
            <person name="Beasley F."/>
            <person name="Chen W."/>
            <person name="Konopka A."/>
            <person name="Xie G."/>
        </authorList>
    </citation>
    <scope>NUCLEOTIDE SEQUENCE [LARGE SCALE GENOMIC DNA]</scope>
    <source>
        <strain>FB24</strain>
    </source>
</reference>
<sequence length="389" mass="40530">MDLFEYQARDMFEAHGVPVLAGIVAHTPEEAKAAAEKIGGVTVVKAQVKVGGRGKAGGVKVAKTADEALEHSTNILGMDIKGHTVNKVMIAQGADIAEEYYFSVLLDRANRNYLAMCSVEGGMEIEQLAVERPDALAKVAIDPAVGIDQAKADEIVAAAGFAEELRGKVADVILKLWDVFKKEDATLVEVNPLVKTGAGDIVALDGKVTLDENADFRHAKHALLEDKDAADPLEAKAKAQDLNYVKLDGEVGIIGNGAGLVMSTLDVVAYAGENHGNVKPANFLDIGGGASAEVMAAGLDVILGDEQVKSVFVNVFGGITACDAVAKGIVGALAELGHSANKPLVVRLDGNNVEEGRRILAEANHPLVTLAATMDEGADKAAELANAAK</sequence>
<name>SUCC_ARTS2</name>
<keyword id="KW-0067">ATP-binding</keyword>
<keyword id="KW-0436">Ligase</keyword>
<keyword id="KW-0460">Magnesium</keyword>
<keyword id="KW-0479">Metal-binding</keyword>
<keyword id="KW-0547">Nucleotide-binding</keyword>
<keyword id="KW-1185">Reference proteome</keyword>
<keyword id="KW-0816">Tricarboxylic acid cycle</keyword>
<comment type="function">
    <text evidence="1">Succinyl-CoA synthetase functions in the citric acid cycle (TCA), coupling the hydrolysis of succinyl-CoA to the synthesis of either ATP or GTP and thus represents the only step of substrate-level phosphorylation in the TCA. The beta subunit provides nucleotide specificity of the enzyme and binds the substrate succinate, while the binding sites for coenzyme A and phosphate are found in the alpha subunit.</text>
</comment>
<comment type="catalytic activity">
    <reaction evidence="1">
        <text>succinate + ATP + CoA = succinyl-CoA + ADP + phosphate</text>
        <dbReference type="Rhea" id="RHEA:17661"/>
        <dbReference type="ChEBI" id="CHEBI:30031"/>
        <dbReference type="ChEBI" id="CHEBI:30616"/>
        <dbReference type="ChEBI" id="CHEBI:43474"/>
        <dbReference type="ChEBI" id="CHEBI:57287"/>
        <dbReference type="ChEBI" id="CHEBI:57292"/>
        <dbReference type="ChEBI" id="CHEBI:456216"/>
        <dbReference type="EC" id="6.2.1.5"/>
    </reaction>
    <physiologicalReaction direction="right-to-left" evidence="1">
        <dbReference type="Rhea" id="RHEA:17663"/>
    </physiologicalReaction>
</comment>
<comment type="catalytic activity">
    <reaction evidence="1">
        <text>GTP + succinate + CoA = succinyl-CoA + GDP + phosphate</text>
        <dbReference type="Rhea" id="RHEA:22120"/>
        <dbReference type="ChEBI" id="CHEBI:30031"/>
        <dbReference type="ChEBI" id="CHEBI:37565"/>
        <dbReference type="ChEBI" id="CHEBI:43474"/>
        <dbReference type="ChEBI" id="CHEBI:57287"/>
        <dbReference type="ChEBI" id="CHEBI:57292"/>
        <dbReference type="ChEBI" id="CHEBI:58189"/>
    </reaction>
    <physiologicalReaction direction="right-to-left" evidence="1">
        <dbReference type="Rhea" id="RHEA:22122"/>
    </physiologicalReaction>
</comment>
<comment type="cofactor">
    <cofactor evidence="1">
        <name>Mg(2+)</name>
        <dbReference type="ChEBI" id="CHEBI:18420"/>
    </cofactor>
    <text evidence="1">Binds 1 Mg(2+) ion per subunit.</text>
</comment>
<comment type="pathway">
    <text evidence="1">Carbohydrate metabolism; tricarboxylic acid cycle; succinate from succinyl-CoA (ligase route): step 1/1.</text>
</comment>
<comment type="subunit">
    <text evidence="1">Heterotetramer of two alpha and two beta subunits.</text>
</comment>
<comment type="similarity">
    <text evidence="1">Belongs to the succinate/malate CoA ligase beta subunit family.</text>
</comment>
<proteinExistence type="inferred from homology"/>
<protein>
    <recommendedName>
        <fullName evidence="1">Succinate--CoA ligase [ADP-forming] subunit beta</fullName>
        <ecNumber evidence="1">6.2.1.5</ecNumber>
    </recommendedName>
    <alternativeName>
        <fullName evidence="1">Succinyl-CoA synthetase subunit beta</fullName>
        <shortName evidence="1">SCS-beta</shortName>
    </alternativeName>
</protein>
<feature type="chain" id="PRO_1000082001" description="Succinate--CoA ligase [ADP-forming] subunit beta">
    <location>
        <begin position="1"/>
        <end position="389"/>
    </location>
</feature>
<feature type="domain" description="ATP-grasp" evidence="1">
    <location>
        <begin position="9"/>
        <end position="236"/>
    </location>
</feature>
<feature type="binding site" evidence="1">
    <location>
        <position position="45"/>
    </location>
    <ligand>
        <name>ATP</name>
        <dbReference type="ChEBI" id="CHEBI:30616"/>
    </ligand>
</feature>
<feature type="binding site" evidence="1">
    <location>
        <begin position="52"/>
        <end position="54"/>
    </location>
    <ligand>
        <name>ATP</name>
        <dbReference type="ChEBI" id="CHEBI:30616"/>
    </ligand>
</feature>
<feature type="binding site" evidence="1">
    <location>
        <position position="94"/>
    </location>
    <ligand>
        <name>ATP</name>
        <dbReference type="ChEBI" id="CHEBI:30616"/>
    </ligand>
</feature>
<feature type="binding site" evidence="1">
    <location>
        <position position="99"/>
    </location>
    <ligand>
        <name>ATP</name>
        <dbReference type="ChEBI" id="CHEBI:30616"/>
    </ligand>
</feature>
<feature type="binding site" evidence="1">
    <location>
        <position position="191"/>
    </location>
    <ligand>
        <name>Mg(2+)</name>
        <dbReference type="ChEBI" id="CHEBI:18420"/>
    </ligand>
</feature>
<feature type="binding site" evidence="1">
    <location>
        <position position="205"/>
    </location>
    <ligand>
        <name>Mg(2+)</name>
        <dbReference type="ChEBI" id="CHEBI:18420"/>
    </ligand>
</feature>
<feature type="binding site" evidence="1">
    <location>
        <position position="256"/>
    </location>
    <ligand>
        <name>substrate</name>
        <note>ligand shared with subunit alpha</note>
    </ligand>
</feature>
<feature type="binding site" evidence="1">
    <location>
        <begin position="318"/>
        <end position="320"/>
    </location>
    <ligand>
        <name>substrate</name>
        <note>ligand shared with subunit alpha</note>
    </ligand>
</feature>
<accession>A0JT43</accession>
<evidence type="ECO:0000255" key="1">
    <source>
        <dbReference type="HAMAP-Rule" id="MF_00558"/>
    </source>
</evidence>
<organism>
    <name type="scientific">Arthrobacter sp. (strain FB24)</name>
    <dbReference type="NCBI Taxonomy" id="290399"/>
    <lineage>
        <taxon>Bacteria</taxon>
        <taxon>Bacillati</taxon>
        <taxon>Actinomycetota</taxon>
        <taxon>Actinomycetes</taxon>
        <taxon>Micrococcales</taxon>
        <taxon>Micrococcaceae</taxon>
        <taxon>Arthrobacter</taxon>
    </lineage>
</organism>
<dbReference type="EC" id="6.2.1.5" evidence="1"/>
<dbReference type="EMBL" id="CP000454">
    <property type="protein sequence ID" value="ABK02213.1"/>
    <property type="molecule type" value="Genomic_DNA"/>
</dbReference>
<dbReference type="RefSeq" id="WP_011690680.1">
    <property type="nucleotide sequence ID" value="NC_008541.1"/>
</dbReference>
<dbReference type="SMR" id="A0JT43"/>
<dbReference type="STRING" id="290399.Arth_0815"/>
<dbReference type="KEGG" id="art:Arth_0815"/>
<dbReference type="eggNOG" id="COG0045">
    <property type="taxonomic scope" value="Bacteria"/>
</dbReference>
<dbReference type="HOGENOM" id="CLU_037430_0_2_11"/>
<dbReference type="OrthoDB" id="9802602at2"/>
<dbReference type="UniPathway" id="UPA00223">
    <property type="reaction ID" value="UER00999"/>
</dbReference>
<dbReference type="Proteomes" id="UP000000754">
    <property type="component" value="Chromosome"/>
</dbReference>
<dbReference type="GO" id="GO:0005829">
    <property type="term" value="C:cytosol"/>
    <property type="evidence" value="ECO:0007669"/>
    <property type="project" value="TreeGrafter"/>
</dbReference>
<dbReference type="GO" id="GO:0042709">
    <property type="term" value="C:succinate-CoA ligase complex"/>
    <property type="evidence" value="ECO:0007669"/>
    <property type="project" value="TreeGrafter"/>
</dbReference>
<dbReference type="GO" id="GO:0005524">
    <property type="term" value="F:ATP binding"/>
    <property type="evidence" value="ECO:0007669"/>
    <property type="project" value="UniProtKB-UniRule"/>
</dbReference>
<dbReference type="GO" id="GO:0000287">
    <property type="term" value="F:magnesium ion binding"/>
    <property type="evidence" value="ECO:0007669"/>
    <property type="project" value="UniProtKB-UniRule"/>
</dbReference>
<dbReference type="GO" id="GO:0004775">
    <property type="term" value="F:succinate-CoA ligase (ADP-forming) activity"/>
    <property type="evidence" value="ECO:0007669"/>
    <property type="project" value="UniProtKB-UniRule"/>
</dbReference>
<dbReference type="GO" id="GO:0004776">
    <property type="term" value="F:succinate-CoA ligase (GDP-forming) activity"/>
    <property type="evidence" value="ECO:0007669"/>
    <property type="project" value="RHEA"/>
</dbReference>
<dbReference type="GO" id="GO:0006104">
    <property type="term" value="P:succinyl-CoA metabolic process"/>
    <property type="evidence" value="ECO:0007669"/>
    <property type="project" value="TreeGrafter"/>
</dbReference>
<dbReference type="GO" id="GO:0006099">
    <property type="term" value="P:tricarboxylic acid cycle"/>
    <property type="evidence" value="ECO:0007669"/>
    <property type="project" value="UniProtKB-UniRule"/>
</dbReference>
<dbReference type="FunFam" id="3.30.1490.20:FF:000014">
    <property type="entry name" value="Succinate--CoA ligase [ADP-forming] subunit beta"/>
    <property type="match status" value="1"/>
</dbReference>
<dbReference type="FunFam" id="3.30.470.20:FF:000002">
    <property type="entry name" value="Succinate--CoA ligase [ADP-forming] subunit beta"/>
    <property type="match status" value="1"/>
</dbReference>
<dbReference type="FunFam" id="3.40.50.261:FF:000007">
    <property type="entry name" value="Succinate--CoA ligase [ADP-forming] subunit beta"/>
    <property type="match status" value="1"/>
</dbReference>
<dbReference type="Gene3D" id="3.30.1490.20">
    <property type="entry name" value="ATP-grasp fold, A domain"/>
    <property type="match status" value="1"/>
</dbReference>
<dbReference type="Gene3D" id="3.30.470.20">
    <property type="entry name" value="ATP-grasp fold, B domain"/>
    <property type="match status" value="1"/>
</dbReference>
<dbReference type="Gene3D" id="3.40.50.261">
    <property type="entry name" value="Succinyl-CoA synthetase domains"/>
    <property type="match status" value="1"/>
</dbReference>
<dbReference type="HAMAP" id="MF_00558">
    <property type="entry name" value="Succ_CoA_beta"/>
    <property type="match status" value="1"/>
</dbReference>
<dbReference type="InterPro" id="IPR011761">
    <property type="entry name" value="ATP-grasp"/>
</dbReference>
<dbReference type="InterPro" id="IPR013650">
    <property type="entry name" value="ATP-grasp_succ-CoA_synth-type"/>
</dbReference>
<dbReference type="InterPro" id="IPR013815">
    <property type="entry name" value="ATP_grasp_subdomain_1"/>
</dbReference>
<dbReference type="InterPro" id="IPR017866">
    <property type="entry name" value="Succ-CoA_synthase_bsu_CS"/>
</dbReference>
<dbReference type="InterPro" id="IPR005811">
    <property type="entry name" value="SUCC_ACL_C"/>
</dbReference>
<dbReference type="InterPro" id="IPR005809">
    <property type="entry name" value="Succ_CoA_ligase-like_bsu"/>
</dbReference>
<dbReference type="InterPro" id="IPR016102">
    <property type="entry name" value="Succinyl-CoA_synth-like"/>
</dbReference>
<dbReference type="NCBIfam" id="NF001913">
    <property type="entry name" value="PRK00696.1"/>
    <property type="match status" value="1"/>
</dbReference>
<dbReference type="NCBIfam" id="TIGR01016">
    <property type="entry name" value="sucCoAbeta"/>
    <property type="match status" value="1"/>
</dbReference>
<dbReference type="PANTHER" id="PTHR11815:SF10">
    <property type="entry name" value="SUCCINATE--COA LIGASE [GDP-FORMING] SUBUNIT BETA, MITOCHONDRIAL"/>
    <property type="match status" value="1"/>
</dbReference>
<dbReference type="PANTHER" id="PTHR11815">
    <property type="entry name" value="SUCCINYL-COA SYNTHETASE BETA CHAIN"/>
    <property type="match status" value="1"/>
</dbReference>
<dbReference type="Pfam" id="PF08442">
    <property type="entry name" value="ATP-grasp_2"/>
    <property type="match status" value="1"/>
</dbReference>
<dbReference type="Pfam" id="PF00549">
    <property type="entry name" value="Ligase_CoA"/>
    <property type="match status" value="1"/>
</dbReference>
<dbReference type="PIRSF" id="PIRSF001554">
    <property type="entry name" value="SucCS_beta"/>
    <property type="match status" value="1"/>
</dbReference>
<dbReference type="SUPFAM" id="SSF56059">
    <property type="entry name" value="Glutathione synthetase ATP-binding domain-like"/>
    <property type="match status" value="1"/>
</dbReference>
<dbReference type="SUPFAM" id="SSF52210">
    <property type="entry name" value="Succinyl-CoA synthetase domains"/>
    <property type="match status" value="1"/>
</dbReference>
<dbReference type="PROSITE" id="PS50975">
    <property type="entry name" value="ATP_GRASP"/>
    <property type="match status" value="1"/>
</dbReference>
<dbReference type="PROSITE" id="PS01217">
    <property type="entry name" value="SUCCINYL_COA_LIG_3"/>
    <property type="match status" value="1"/>
</dbReference>